<sequence length="58" mass="6847">MSEIKVGENESLENALRRFKKKCARAGVLSEVRKREHYEKPSVKKKKKSEAARKRKFK</sequence>
<dbReference type="EMBL" id="CP000728">
    <property type="protein sequence ID" value="ABS42699.1"/>
    <property type="molecule type" value="Genomic_DNA"/>
</dbReference>
<dbReference type="RefSeq" id="WP_003357777.1">
    <property type="nucleotide sequence ID" value="NC_009699.1"/>
</dbReference>
<dbReference type="SMR" id="A7GHH0"/>
<dbReference type="GeneID" id="92939674"/>
<dbReference type="KEGG" id="cbf:CLI_3006"/>
<dbReference type="HOGENOM" id="CLU_159258_1_2_9"/>
<dbReference type="Proteomes" id="UP000002410">
    <property type="component" value="Chromosome"/>
</dbReference>
<dbReference type="GO" id="GO:1990904">
    <property type="term" value="C:ribonucleoprotein complex"/>
    <property type="evidence" value="ECO:0007669"/>
    <property type="project" value="UniProtKB-KW"/>
</dbReference>
<dbReference type="GO" id="GO:0005840">
    <property type="term" value="C:ribosome"/>
    <property type="evidence" value="ECO:0007669"/>
    <property type="project" value="UniProtKB-KW"/>
</dbReference>
<dbReference type="GO" id="GO:0003735">
    <property type="term" value="F:structural constituent of ribosome"/>
    <property type="evidence" value="ECO:0007669"/>
    <property type="project" value="InterPro"/>
</dbReference>
<dbReference type="GO" id="GO:0006412">
    <property type="term" value="P:translation"/>
    <property type="evidence" value="ECO:0007669"/>
    <property type="project" value="UniProtKB-UniRule"/>
</dbReference>
<dbReference type="Gene3D" id="1.20.5.1150">
    <property type="entry name" value="Ribosomal protein S8"/>
    <property type="match status" value="1"/>
</dbReference>
<dbReference type="HAMAP" id="MF_00358">
    <property type="entry name" value="Ribosomal_bS21"/>
    <property type="match status" value="1"/>
</dbReference>
<dbReference type="InterPro" id="IPR001911">
    <property type="entry name" value="Ribosomal_bS21"/>
</dbReference>
<dbReference type="InterPro" id="IPR018278">
    <property type="entry name" value="Ribosomal_bS21_CS"/>
</dbReference>
<dbReference type="InterPro" id="IPR038380">
    <property type="entry name" value="Ribosomal_bS21_sf"/>
</dbReference>
<dbReference type="NCBIfam" id="TIGR00030">
    <property type="entry name" value="S21p"/>
    <property type="match status" value="1"/>
</dbReference>
<dbReference type="PANTHER" id="PTHR21109">
    <property type="entry name" value="MITOCHONDRIAL 28S RIBOSOMAL PROTEIN S21"/>
    <property type="match status" value="1"/>
</dbReference>
<dbReference type="PANTHER" id="PTHR21109:SF22">
    <property type="entry name" value="SMALL RIBOSOMAL SUBUNIT PROTEIN BS21"/>
    <property type="match status" value="1"/>
</dbReference>
<dbReference type="Pfam" id="PF01165">
    <property type="entry name" value="Ribosomal_S21"/>
    <property type="match status" value="1"/>
</dbReference>
<dbReference type="PRINTS" id="PR00976">
    <property type="entry name" value="RIBOSOMALS21"/>
</dbReference>
<dbReference type="PROSITE" id="PS01181">
    <property type="entry name" value="RIBOSOMAL_S21"/>
    <property type="match status" value="1"/>
</dbReference>
<gene>
    <name evidence="1" type="primary">rpsU</name>
    <name type="ordered locus">CLI_3006</name>
</gene>
<comment type="similarity">
    <text evidence="1">Belongs to the bacterial ribosomal protein bS21 family.</text>
</comment>
<feature type="chain" id="PRO_1000005111" description="Small ribosomal subunit protein bS21">
    <location>
        <begin position="1"/>
        <end position="58"/>
    </location>
</feature>
<feature type="region of interest" description="Disordered" evidence="2">
    <location>
        <begin position="32"/>
        <end position="58"/>
    </location>
</feature>
<feature type="compositionally biased region" description="Basic and acidic residues" evidence="2">
    <location>
        <begin position="32"/>
        <end position="42"/>
    </location>
</feature>
<feature type="compositionally biased region" description="Basic residues" evidence="2">
    <location>
        <begin position="43"/>
        <end position="58"/>
    </location>
</feature>
<organism>
    <name type="scientific">Clostridium botulinum (strain Langeland / NCTC 10281 / Type F)</name>
    <dbReference type="NCBI Taxonomy" id="441772"/>
    <lineage>
        <taxon>Bacteria</taxon>
        <taxon>Bacillati</taxon>
        <taxon>Bacillota</taxon>
        <taxon>Clostridia</taxon>
        <taxon>Eubacteriales</taxon>
        <taxon>Clostridiaceae</taxon>
        <taxon>Clostridium</taxon>
    </lineage>
</organism>
<reference key="1">
    <citation type="submission" date="2007-06" db="EMBL/GenBank/DDBJ databases">
        <authorList>
            <person name="Brinkac L.M."/>
            <person name="Daugherty S."/>
            <person name="Dodson R.J."/>
            <person name="Madupu R."/>
            <person name="Brown J.L."/>
            <person name="Bruce D."/>
            <person name="Detter C."/>
            <person name="Munk C."/>
            <person name="Smith L.A."/>
            <person name="Smith T.J."/>
            <person name="White O."/>
            <person name="Brettin T.S."/>
        </authorList>
    </citation>
    <scope>NUCLEOTIDE SEQUENCE [LARGE SCALE GENOMIC DNA]</scope>
    <source>
        <strain>Langeland / NCTC 10281 / Type F</strain>
    </source>
</reference>
<proteinExistence type="inferred from homology"/>
<keyword id="KW-0687">Ribonucleoprotein</keyword>
<keyword id="KW-0689">Ribosomal protein</keyword>
<protein>
    <recommendedName>
        <fullName evidence="1">Small ribosomal subunit protein bS21</fullName>
    </recommendedName>
    <alternativeName>
        <fullName evidence="3">30S ribosomal protein S21</fullName>
    </alternativeName>
</protein>
<evidence type="ECO:0000255" key="1">
    <source>
        <dbReference type="HAMAP-Rule" id="MF_00358"/>
    </source>
</evidence>
<evidence type="ECO:0000256" key="2">
    <source>
        <dbReference type="SAM" id="MobiDB-lite"/>
    </source>
</evidence>
<evidence type="ECO:0000305" key="3"/>
<accession>A7GHH0</accession>
<name>RS21_CLOBL</name>